<reference key="1">
    <citation type="journal article" date="2006" name="J. Bacteriol.">
        <title>Pathogenomic sequence analysis of Bacillus cereus and Bacillus thuringiensis isolates closely related to Bacillus anthracis.</title>
        <authorList>
            <person name="Han C.S."/>
            <person name="Xie G."/>
            <person name="Challacombe J.F."/>
            <person name="Altherr M.R."/>
            <person name="Bhotika S.S."/>
            <person name="Bruce D."/>
            <person name="Campbell C.S."/>
            <person name="Campbell M.L."/>
            <person name="Chen J."/>
            <person name="Chertkov O."/>
            <person name="Cleland C."/>
            <person name="Dimitrijevic M."/>
            <person name="Doggett N.A."/>
            <person name="Fawcett J.J."/>
            <person name="Glavina T."/>
            <person name="Goodwin L.A."/>
            <person name="Hill K.K."/>
            <person name="Hitchcock P."/>
            <person name="Jackson P.J."/>
            <person name="Keim P."/>
            <person name="Kewalramani A.R."/>
            <person name="Longmire J."/>
            <person name="Lucas S."/>
            <person name="Malfatti S."/>
            <person name="McMurry K."/>
            <person name="Meincke L.J."/>
            <person name="Misra M."/>
            <person name="Moseman B.L."/>
            <person name="Mundt M."/>
            <person name="Munk A.C."/>
            <person name="Okinaka R.T."/>
            <person name="Parson-Quintana B."/>
            <person name="Reilly L.P."/>
            <person name="Richardson P."/>
            <person name="Robinson D.L."/>
            <person name="Rubin E."/>
            <person name="Saunders E."/>
            <person name="Tapia R."/>
            <person name="Tesmer J.G."/>
            <person name="Thayer N."/>
            <person name="Thompson L.S."/>
            <person name="Tice H."/>
            <person name="Ticknor L.O."/>
            <person name="Wills P.L."/>
            <person name="Brettin T.S."/>
            <person name="Gilna P."/>
        </authorList>
    </citation>
    <scope>NUCLEOTIDE SEQUENCE [LARGE SCALE GENOMIC DNA]</scope>
    <source>
        <strain>ZK / E33L</strain>
    </source>
</reference>
<gene>
    <name type="ordered locus">BCE33L0761</name>
</gene>
<proteinExistence type="inferred from homology"/>
<protein>
    <recommendedName>
        <fullName evidence="1">UPF0342 protein BCE33L0761</fullName>
    </recommendedName>
</protein>
<dbReference type="EMBL" id="CP000001">
    <property type="protein sequence ID" value="AAU19481.1"/>
    <property type="molecule type" value="Genomic_DNA"/>
</dbReference>
<dbReference type="RefSeq" id="WP_000164606.1">
    <property type="nucleotide sequence ID" value="NZ_CP009968.1"/>
</dbReference>
<dbReference type="SMR" id="Q63FE7"/>
<dbReference type="KEGG" id="bcz:BCE33L0761"/>
<dbReference type="PATRIC" id="fig|288681.22.peg.4821"/>
<dbReference type="Proteomes" id="UP000002612">
    <property type="component" value="Chromosome"/>
</dbReference>
<dbReference type="Gene3D" id="1.20.1500.10">
    <property type="entry name" value="YheA/YmcA-like"/>
    <property type="match status" value="1"/>
</dbReference>
<dbReference type="HAMAP" id="MF_01526">
    <property type="entry name" value="UPF0342"/>
    <property type="match status" value="1"/>
</dbReference>
<dbReference type="InterPro" id="IPR010368">
    <property type="entry name" value="Com_YlbF"/>
</dbReference>
<dbReference type="InterPro" id="IPR023378">
    <property type="entry name" value="YheA/YmcA-like_dom_sf"/>
</dbReference>
<dbReference type="NCBIfam" id="NF010211">
    <property type="entry name" value="PRK13676.1-4"/>
    <property type="match status" value="1"/>
</dbReference>
<dbReference type="Pfam" id="PF06133">
    <property type="entry name" value="Com_YlbF"/>
    <property type="match status" value="1"/>
</dbReference>
<dbReference type="SUPFAM" id="SSF158622">
    <property type="entry name" value="YheA/YmcA-like"/>
    <property type="match status" value="1"/>
</dbReference>
<sequence>MTKNIHDVAYELQKAIAENDDFKTLKESYAAVQADAASKNLFDEFRTMQLSLQQKMMQGQEITEEDNQQAQEVVVRIQQDAKITKLMETEQRLNVVIGDVNKIIMKPLEELYSAQQQA</sequence>
<comment type="similarity">
    <text evidence="1">Belongs to the UPF0342 family.</text>
</comment>
<feature type="chain" id="PRO_0000109966" description="UPF0342 protein BCE33L0761">
    <location>
        <begin position="1"/>
        <end position="118"/>
    </location>
</feature>
<organism>
    <name type="scientific">Bacillus cereus (strain ZK / E33L)</name>
    <dbReference type="NCBI Taxonomy" id="288681"/>
    <lineage>
        <taxon>Bacteria</taxon>
        <taxon>Bacillati</taxon>
        <taxon>Bacillota</taxon>
        <taxon>Bacilli</taxon>
        <taxon>Bacillales</taxon>
        <taxon>Bacillaceae</taxon>
        <taxon>Bacillus</taxon>
        <taxon>Bacillus cereus group</taxon>
    </lineage>
</organism>
<accession>Q63FE7</accession>
<evidence type="ECO:0000255" key="1">
    <source>
        <dbReference type="HAMAP-Rule" id="MF_01526"/>
    </source>
</evidence>
<name>Y761_BACCZ</name>